<evidence type="ECO:0000255" key="1">
    <source>
        <dbReference type="HAMAP-Rule" id="MF_00059"/>
    </source>
</evidence>
<comment type="function">
    <text evidence="1">DNA-dependent RNA polymerase catalyzes the transcription of DNA into RNA using the four ribonucleoside triphosphates as substrates.</text>
</comment>
<comment type="catalytic activity">
    <reaction evidence="1">
        <text>RNA(n) + a ribonucleoside 5'-triphosphate = RNA(n+1) + diphosphate</text>
        <dbReference type="Rhea" id="RHEA:21248"/>
        <dbReference type="Rhea" id="RHEA-COMP:14527"/>
        <dbReference type="Rhea" id="RHEA-COMP:17342"/>
        <dbReference type="ChEBI" id="CHEBI:33019"/>
        <dbReference type="ChEBI" id="CHEBI:61557"/>
        <dbReference type="ChEBI" id="CHEBI:140395"/>
        <dbReference type="EC" id="2.7.7.6"/>
    </reaction>
</comment>
<comment type="subunit">
    <text evidence="1">Homodimer. The RNAP catalytic core consists of 2 alpha, 1 beta, 1 beta' and 1 omega subunit. When a sigma factor is associated with the core the holoenzyme is formed, which can initiate transcription.</text>
</comment>
<comment type="domain">
    <text evidence="1">The N-terminal domain is essential for RNAP assembly and basal transcription, whereas the C-terminal domain is involved in interaction with transcriptional regulators and with upstream promoter elements.</text>
</comment>
<comment type="similarity">
    <text evidence="1">Belongs to the RNA polymerase alpha chain family.</text>
</comment>
<organism>
    <name type="scientific">Rhizobium etli (strain CIAT 652)</name>
    <dbReference type="NCBI Taxonomy" id="491916"/>
    <lineage>
        <taxon>Bacteria</taxon>
        <taxon>Pseudomonadati</taxon>
        <taxon>Pseudomonadota</taxon>
        <taxon>Alphaproteobacteria</taxon>
        <taxon>Hyphomicrobiales</taxon>
        <taxon>Rhizobiaceae</taxon>
        <taxon>Rhizobium/Agrobacterium group</taxon>
        <taxon>Rhizobium</taxon>
    </lineage>
</organism>
<accession>B3PWU5</accession>
<protein>
    <recommendedName>
        <fullName evidence="1">DNA-directed RNA polymerase subunit alpha</fullName>
        <shortName evidence="1">RNAP subunit alpha</shortName>
        <ecNumber evidence="1">2.7.7.6</ecNumber>
    </recommendedName>
    <alternativeName>
        <fullName evidence="1">RNA polymerase subunit alpha</fullName>
    </alternativeName>
    <alternativeName>
        <fullName evidence="1">Transcriptase subunit alpha</fullName>
    </alternativeName>
</protein>
<feature type="chain" id="PRO_1000091964" description="DNA-directed RNA polymerase subunit alpha">
    <location>
        <begin position="1"/>
        <end position="336"/>
    </location>
</feature>
<feature type="region of interest" description="Alpha N-terminal domain (alpha-NTD)" evidence="1">
    <location>
        <begin position="1"/>
        <end position="232"/>
    </location>
</feature>
<feature type="region of interest" description="Alpha C-terminal domain (alpha-CTD)" evidence="1">
    <location>
        <begin position="248"/>
        <end position="336"/>
    </location>
</feature>
<proteinExistence type="inferred from homology"/>
<gene>
    <name evidence="1" type="primary">rpoA</name>
    <name type="ordered locus">RHECIAT_CH0001773</name>
</gene>
<name>RPOA_RHIE6</name>
<keyword id="KW-0240">DNA-directed RNA polymerase</keyword>
<keyword id="KW-0548">Nucleotidyltransferase</keyword>
<keyword id="KW-0804">Transcription</keyword>
<keyword id="KW-0808">Transferase</keyword>
<dbReference type="EC" id="2.7.7.6" evidence="1"/>
<dbReference type="EMBL" id="CP001074">
    <property type="protein sequence ID" value="ACE90743.1"/>
    <property type="molecule type" value="Genomic_DNA"/>
</dbReference>
<dbReference type="SMR" id="B3PWU5"/>
<dbReference type="KEGG" id="rec:RHECIAT_CH0001773"/>
<dbReference type="eggNOG" id="COG0202">
    <property type="taxonomic scope" value="Bacteria"/>
</dbReference>
<dbReference type="HOGENOM" id="CLU_053084_0_0_5"/>
<dbReference type="Proteomes" id="UP000008817">
    <property type="component" value="Chromosome"/>
</dbReference>
<dbReference type="GO" id="GO:0005737">
    <property type="term" value="C:cytoplasm"/>
    <property type="evidence" value="ECO:0007669"/>
    <property type="project" value="UniProtKB-ARBA"/>
</dbReference>
<dbReference type="GO" id="GO:0000428">
    <property type="term" value="C:DNA-directed RNA polymerase complex"/>
    <property type="evidence" value="ECO:0007669"/>
    <property type="project" value="UniProtKB-KW"/>
</dbReference>
<dbReference type="GO" id="GO:0003677">
    <property type="term" value="F:DNA binding"/>
    <property type="evidence" value="ECO:0007669"/>
    <property type="project" value="UniProtKB-UniRule"/>
</dbReference>
<dbReference type="GO" id="GO:0003899">
    <property type="term" value="F:DNA-directed RNA polymerase activity"/>
    <property type="evidence" value="ECO:0007669"/>
    <property type="project" value="UniProtKB-UniRule"/>
</dbReference>
<dbReference type="GO" id="GO:0046983">
    <property type="term" value="F:protein dimerization activity"/>
    <property type="evidence" value="ECO:0007669"/>
    <property type="project" value="InterPro"/>
</dbReference>
<dbReference type="GO" id="GO:0006351">
    <property type="term" value="P:DNA-templated transcription"/>
    <property type="evidence" value="ECO:0007669"/>
    <property type="project" value="UniProtKB-UniRule"/>
</dbReference>
<dbReference type="CDD" id="cd06928">
    <property type="entry name" value="RNAP_alpha_NTD"/>
    <property type="match status" value="1"/>
</dbReference>
<dbReference type="FunFam" id="1.10.150.20:FF:000001">
    <property type="entry name" value="DNA-directed RNA polymerase subunit alpha"/>
    <property type="match status" value="1"/>
</dbReference>
<dbReference type="FunFam" id="2.170.120.12:FF:000001">
    <property type="entry name" value="DNA-directed RNA polymerase subunit alpha"/>
    <property type="match status" value="1"/>
</dbReference>
<dbReference type="Gene3D" id="1.10.150.20">
    <property type="entry name" value="5' to 3' exonuclease, C-terminal subdomain"/>
    <property type="match status" value="1"/>
</dbReference>
<dbReference type="Gene3D" id="2.170.120.12">
    <property type="entry name" value="DNA-directed RNA polymerase, insert domain"/>
    <property type="match status" value="1"/>
</dbReference>
<dbReference type="Gene3D" id="3.30.1360.10">
    <property type="entry name" value="RNA polymerase, RBP11-like subunit"/>
    <property type="match status" value="1"/>
</dbReference>
<dbReference type="HAMAP" id="MF_00059">
    <property type="entry name" value="RNApol_bact_RpoA"/>
    <property type="match status" value="1"/>
</dbReference>
<dbReference type="InterPro" id="IPR011262">
    <property type="entry name" value="DNA-dir_RNA_pol_insert"/>
</dbReference>
<dbReference type="InterPro" id="IPR011263">
    <property type="entry name" value="DNA-dir_RNA_pol_RpoA/D/Rpb3"/>
</dbReference>
<dbReference type="InterPro" id="IPR011773">
    <property type="entry name" value="DNA-dir_RpoA"/>
</dbReference>
<dbReference type="InterPro" id="IPR036603">
    <property type="entry name" value="RBP11-like"/>
</dbReference>
<dbReference type="InterPro" id="IPR011260">
    <property type="entry name" value="RNAP_asu_C"/>
</dbReference>
<dbReference type="InterPro" id="IPR036643">
    <property type="entry name" value="RNApol_insert_sf"/>
</dbReference>
<dbReference type="NCBIfam" id="NF003513">
    <property type="entry name" value="PRK05182.1-2"/>
    <property type="match status" value="1"/>
</dbReference>
<dbReference type="NCBIfam" id="NF003519">
    <property type="entry name" value="PRK05182.2-5"/>
    <property type="match status" value="1"/>
</dbReference>
<dbReference type="NCBIfam" id="TIGR02027">
    <property type="entry name" value="rpoA"/>
    <property type="match status" value="1"/>
</dbReference>
<dbReference type="Pfam" id="PF01000">
    <property type="entry name" value="RNA_pol_A_bac"/>
    <property type="match status" value="1"/>
</dbReference>
<dbReference type="Pfam" id="PF03118">
    <property type="entry name" value="RNA_pol_A_CTD"/>
    <property type="match status" value="1"/>
</dbReference>
<dbReference type="Pfam" id="PF01193">
    <property type="entry name" value="RNA_pol_L"/>
    <property type="match status" value="1"/>
</dbReference>
<dbReference type="SMART" id="SM00662">
    <property type="entry name" value="RPOLD"/>
    <property type="match status" value="1"/>
</dbReference>
<dbReference type="SUPFAM" id="SSF47789">
    <property type="entry name" value="C-terminal domain of RNA polymerase alpha subunit"/>
    <property type="match status" value="1"/>
</dbReference>
<dbReference type="SUPFAM" id="SSF56553">
    <property type="entry name" value="Insert subdomain of RNA polymerase alpha subunit"/>
    <property type="match status" value="1"/>
</dbReference>
<dbReference type="SUPFAM" id="SSF55257">
    <property type="entry name" value="RBP11-like subunits of RNA polymerase"/>
    <property type="match status" value="1"/>
</dbReference>
<reference key="1">
    <citation type="journal article" date="2010" name="Appl. Environ. Microbiol.">
        <title>Conserved symbiotic plasmid DNA sequences in the multireplicon pangenomic structure of Rhizobium etli.</title>
        <authorList>
            <person name="Gonzalez V."/>
            <person name="Acosta J.L."/>
            <person name="Santamaria R.I."/>
            <person name="Bustos P."/>
            <person name="Fernandez J.L."/>
            <person name="Hernandez Gonzalez I.L."/>
            <person name="Diaz R."/>
            <person name="Flores M."/>
            <person name="Palacios R."/>
            <person name="Mora J."/>
            <person name="Davila G."/>
        </authorList>
    </citation>
    <scope>NUCLEOTIDE SEQUENCE [LARGE SCALE GENOMIC DNA]</scope>
    <source>
        <strain>CIAT 652</strain>
    </source>
</reference>
<sequence>MIQKNWQELIKPNKVEFSSSSRTRATLVAEPLERGFGLTLGNALRRVLLSSLRGAAVTAVQIDGVLHEFSSIPGVREDVTDIVLNIKEIAIKMDGDDAKRMVVRKQGPGVVTAGDIQTVGDIEILNPEHVICTLDEGAEIRMEFTVNNGKGYVPAERNRAEDAPIGLIPVDSLYSPVKKVSYKVENTREGQVLDYDKLNMTIETDGSITGEDAVAFAARILQDQLGVFVNFDEPQKETEEEAVTELAFNPALLKKVDELELSVRSANCLKNDNIVYIGDLIQKTEAEMLRTPNFGRKSLNEIKEVLASMGLHLGMEVPAWPPENIEDLAKRYEDQY</sequence>